<dbReference type="EC" id="2.7.1.67" evidence="6"/>
<dbReference type="EMBL" id="D83538">
    <property type="protein sequence ID" value="BAA19614.1"/>
    <property type="molecule type" value="mRNA"/>
</dbReference>
<dbReference type="EMBL" id="AC111344">
    <property type="status" value="NOT_ANNOTATED_CDS"/>
    <property type="molecule type" value="Genomic_DNA"/>
</dbReference>
<dbReference type="RefSeq" id="NP_071637.1">
    <property type="nucleotide sequence ID" value="NM_022301.1"/>
</dbReference>
<dbReference type="SMR" id="O08662"/>
<dbReference type="BioGRID" id="248988">
    <property type="interactions" value="3"/>
</dbReference>
<dbReference type="FunCoup" id="O08662">
    <property type="interactions" value="3925"/>
</dbReference>
<dbReference type="IntAct" id="O08662">
    <property type="interactions" value="8"/>
</dbReference>
<dbReference type="MINT" id="O08662"/>
<dbReference type="STRING" id="10116.ENSRNOP00000072265"/>
<dbReference type="CarbonylDB" id="O08662"/>
<dbReference type="GlyGen" id="O08662">
    <property type="glycosylation" value="1 site"/>
</dbReference>
<dbReference type="iPTMnet" id="O08662"/>
<dbReference type="PhosphoSitePlus" id="O08662"/>
<dbReference type="jPOST" id="O08662"/>
<dbReference type="PaxDb" id="10116-ENSRNOP00000059384"/>
<dbReference type="AGR" id="RGD:621213"/>
<dbReference type="RGD" id="621213">
    <property type="gene designation" value="Pi4ka"/>
</dbReference>
<dbReference type="eggNOG" id="KOG0902">
    <property type="taxonomic scope" value="Eukaryota"/>
</dbReference>
<dbReference type="InParanoid" id="O08662"/>
<dbReference type="Reactome" id="R-RNO-1483248">
    <property type="pathway name" value="Synthesis of PIPs at the ER membrane"/>
</dbReference>
<dbReference type="Reactome" id="R-RNO-1660514">
    <property type="pathway name" value="Synthesis of PIPs at the Golgi membrane"/>
</dbReference>
<dbReference type="PRO" id="PR:O08662"/>
<dbReference type="Proteomes" id="UP000002494">
    <property type="component" value="Unplaced"/>
</dbReference>
<dbReference type="GO" id="GO:0005737">
    <property type="term" value="C:cytoplasm"/>
    <property type="evidence" value="ECO:0000266"/>
    <property type="project" value="RGD"/>
</dbReference>
<dbReference type="GO" id="GO:0030660">
    <property type="term" value="C:Golgi-associated vesicle membrane"/>
    <property type="evidence" value="ECO:0000314"/>
    <property type="project" value="RGD"/>
</dbReference>
<dbReference type="GO" id="GO:0005886">
    <property type="term" value="C:plasma membrane"/>
    <property type="evidence" value="ECO:0000250"/>
    <property type="project" value="UniProtKB"/>
</dbReference>
<dbReference type="GO" id="GO:0004430">
    <property type="term" value="F:1-phosphatidylinositol 4-kinase activity"/>
    <property type="evidence" value="ECO:0000314"/>
    <property type="project" value="RGD"/>
</dbReference>
<dbReference type="GO" id="GO:0005524">
    <property type="term" value="F:ATP binding"/>
    <property type="evidence" value="ECO:0007669"/>
    <property type="project" value="UniProtKB-KW"/>
</dbReference>
<dbReference type="GO" id="GO:0030036">
    <property type="term" value="P:actin cytoskeleton organization"/>
    <property type="evidence" value="ECO:0000266"/>
    <property type="project" value="RGD"/>
</dbReference>
<dbReference type="GO" id="GO:0044788">
    <property type="term" value="P:modulation by host of viral process"/>
    <property type="evidence" value="ECO:0000266"/>
    <property type="project" value="RGD"/>
</dbReference>
<dbReference type="GO" id="GO:0022011">
    <property type="term" value="P:myelination in peripheral nervous system"/>
    <property type="evidence" value="ECO:0000266"/>
    <property type="project" value="RGD"/>
</dbReference>
<dbReference type="GO" id="GO:0046854">
    <property type="term" value="P:phosphatidylinositol phosphate biosynthetic process"/>
    <property type="evidence" value="ECO:0000266"/>
    <property type="project" value="RGD"/>
</dbReference>
<dbReference type="GO" id="GO:0048015">
    <property type="term" value="P:phosphatidylinositol-mediated signaling"/>
    <property type="evidence" value="ECO:0000318"/>
    <property type="project" value="GO_Central"/>
</dbReference>
<dbReference type="GO" id="GO:0140754">
    <property type="term" value="P:reorganization of cellular membranes to establish viral sites of replication"/>
    <property type="evidence" value="ECO:0000266"/>
    <property type="project" value="RGD"/>
</dbReference>
<dbReference type="GO" id="GO:0036135">
    <property type="term" value="P:Schwann cell migration"/>
    <property type="evidence" value="ECO:0000266"/>
    <property type="project" value="RGD"/>
</dbReference>
<dbReference type="CDD" id="cd00871">
    <property type="entry name" value="PI4Ka"/>
    <property type="match status" value="1"/>
</dbReference>
<dbReference type="CDD" id="cd05167">
    <property type="entry name" value="PI4Kc_III_alpha"/>
    <property type="match status" value="1"/>
</dbReference>
<dbReference type="FunFam" id="1.10.1070.11:FF:000005">
    <property type="entry name" value="Phosphatidylinositol 4-kinase, catalytic, alpha"/>
    <property type="match status" value="1"/>
</dbReference>
<dbReference type="FunFam" id="1.25.40.70:FF:000002">
    <property type="entry name" value="Phosphatidylinositol 4-kinase, catalytic, alpha"/>
    <property type="match status" value="1"/>
</dbReference>
<dbReference type="FunFam" id="3.30.1010.10:FF:000009">
    <property type="entry name" value="Phosphatidylinositol 4-kinase, catalytic, alpha"/>
    <property type="match status" value="1"/>
</dbReference>
<dbReference type="Gene3D" id="1.10.1070.11">
    <property type="entry name" value="Phosphatidylinositol 3-/4-kinase, catalytic domain"/>
    <property type="match status" value="1"/>
</dbReference>
<dbReference type="Gene3D" id="3.30.1010.10">
    <property type="entry name" value="Phosphatidylinositol 3-kinase Catalytic Subunit, Chain A, domain 4"/>
    <property type="match status" value="1"/>
</dbReference>
<dbReference type="Gene3D" id="1.25.40.70">
    <property type="entry name" value="Phosphatidylinositol 3-kinase, accessory domain (PIK)"/>
    <property type="match status" value="1"/>
</dbReference>
<dbReference type="InterPro" id="IPR016024">
    <property type="entry name" value="ARM-type_fold"/>
</dbReference>
<dbReference type="InterPro" id="IPR011009">
    <property type="entry name" value="Kinase-like_dom_sf"/>
</dbReference>
<dbReference type="InterPro" id="IPR000403">
    <property type="entry name" value="PI3/4_kinase_cat_dom"/>
</dbReference>
<dbReference type="InterPro" id="IPR036940">
    <property type="entry name" value="PI3/4_kinase_cat_sf"/>
</dbReference>
<dbReference type="InterPro" id="IPR018936">
    <property type="entry name" value="PI3/4_kinase_CS"/>
</dbReference>
<dbReference type="InterPro" id="IPR001263">
    <property type="entry name" value="PI3K_accessory_dom"/>
</dbReference>
<dbReference type="InterPro" id="IPR042236">
    <property type="entry name" value="PI3K_accessory_sf"/>
</dbReference>
<dbReference type="InterPro" id="IPR045495">
    <property type="entry name" value="PI4K_N"/>
</dbReference>
<dbReference type="InterPro" id="IPR015433">
    <property type="entry name" value="PI_Kinase"/>
</dbReference>
<dbReference type="PANTHER" id="PTHR10048:SF15">
    <property type="entry name" value="PHOSPHATIDYLINOSITOL 4-KINASE ALPHA"/>
    <property type="match status" value="1"/>
</dbReference>
<dbReference type="PANTHER" id="PTHR10048">
    <property type="entry name" value="PHOSPHATIDYLINOSITOL KINASE"/>
    <property type="match status" value="1"/>
</dbReference>
<dbReference type="Pfam" id="PF00454">
    <property type="entry name" value="PI3_PI4_kinase"/>
    <property type="match status" value="1"/>
</dbReference>
<dbReference type="Pfam" id="PF00613">
    <property type="entry name" value="PI3Ka"/>
    <property type="match status" value="1"/>
</dbReference>
<dbReference type="Pfam" id="PF19274">
    <property type="entry name" value="PI4K_N"/>
    <property type="match status" value="2"/>
</dbReference>
<dbReference type="SMART" id="SM00145">
    <property type="entry name" value="PI3Ka"/>
    <property type="match status" value="1"/>
</dbReference>
<dbReference type="SMART" id="SM00146">
    <property type="entry name" value="PI3Kc"/>
    <property type="match status" value="1"/>
</dbReference>
<dbReference type="SUPFAM" id="SSF48371">
    <property type="entry name" value="ARM repeat"/>
    <property type="match status" value="2"/>
</dbReference>
<dbReference type="SUPFAM" id="SSF56112">
    <property type="entry name" value="Protein kinase-like (PK-like)"/>
    <property type="match status" value="1"/>
</dbReference>
<dbReference type="PROSITE" id="PS00915">
    <property type="entry name" value="PI3_4_KINASE_1"/>
    <property type="match status" value="1"/>
</dbReference>
<dbReference type="PROSITE" id="PS00916">
    <property type="entry name" value="PI3_4_KINASE_2"/>
    <property type="match status" value="1"/>
</dbReference>
<dbReference type="PROSITE" id="PS50290">
    <property type="entry name" value="PI3_4_KINASE_3"/>
    <property type="match status" value="1"/>
</dbReference>
<dbReference type="PROSITE" id="PS51545">
    <property type="entry name" value="PIK_HELICAL"/>
    <property type="match status" value="1"/>
</dbReference>
<organism>
    <name type="scientific">Rattus norvegicus</name>
    <name type="common">Rat</name>
    <dbReference type="NCBI Taxonomy" id="10116"/>
    <lineage>
        <taxon>Eukaryota</taxon>
        <taxon>Metazoa</taxon>
        <taxon>Chordata</taxon>
        <taxon>Craniata</taxon>
        <taxon>Vertebrata</taxon>
        <taxon>Euteleostomi</taxon>
        <taxon>Mammalia</taxon>
        <taxon>Eutheria</taxon>
        <taxon>Euarchontoglires</taxon>
        <taxon>Glires</taxon>
        <taxon>Rodentia</taxon>
        <taxon>Myomorpha</taxon>
        <taxon>Muroidea</taxon>
        <taxon>Muridae</taxon>
        <taxon>Murinae</taxon>
        <taxon>Rattus</taxon>
    </lineage>
</organism>
<keyword id="KW-0067">ATP-binding</keyword>
<keyword id="KW-1003">Cell membrane</keyword>
<keyword id="KW-0963">Cytoplasm</keyword>
<keyword id="KW-0418">Kinase</keyword>
<keyword id="KW-0443">Lipid metabolism</keyword>
<keyword id="KW-0472">Membrane</keyword>
<keyword id="KW-0547">Nucleotide-binding</keyword>
<keyword id="KW-0597">Phosphoprotein</keyword>
<keyword id="KW-1185">Reference proteome</keyword>
<keyword id="KW-0808">Transferase</keyword>
<sequence length="2096" mass="236920">MAAAGARGTGGSGSSSGSSTSRGFYFNTVLSLARSLAVQRPASLEKVQKLLCMCPVDFHGIFQLDERRRDAVIALGIFLIESDLQHKDCIVPYLLRLLRGLPKVYWVEESTARKGRGNLPVAESFSFCLVTLLSDVACRDPSLRDEILEALLQVLHVLLGMCQALEIQEKEYLCKYAIPCLIGISRSFGRYSNSEESLLSKLFPKVPPHSLRIPEELEGVRRRSFNDFRSILPSNLLTVCQEGTLKRKTSSVSSISQVSPERGMPPPSSPGGSAFHYFEASCLPDGTTLEPEYYFSTISSSFSVSPLFNGITYKEFYIPLEMLRELLNLVKKIVEEPVLKSLDAAVARVMEANPSADLYYTTFSDPVYLTMFKMLRDTLYYMKDLPTSFVKEIHDFVLEQFNMSQGELQKILHDADRIHSEMSPLKLRCQANAACVDLMVWAVKDEQGAENLCIKLSEKLQSKTSSKVIIAHLPLLICCLQGLGRLCERFPVVVHSVTPSLRDFLVIPSPVLVKLYKYHSQYHTVAGSDIKISVTNEHSESTLNVLPGKKNQPSMYEQLRDIAIDNICRCLKAGLTVDPVIVEAFLASLSNRLYISQESDKDAHLIPDHTIRALGHIAVALRDTPKVMEPILQILQQKFCQPPSPLDVLIIDQLGCLVITGNQYIYQEVWNLFQQISVKASSVVYSATKDYKDHGYRHCSLAVINALANIAANIQEEHLVDELLMNLLELFVQLGLEGKRASERASEKGPALKASSSAGNLGVLIPVIAVLTRRLPPIKEAKPRLQKLFRDFWLYSVLMGFAVEGSGLWPEEWYEGVCEIATKSPLLTFPSKEPLRSVLQYNSAMKNDTVTPAELNELRSTIINLLDPPPEVSALINKLDFAMSTYLLSVYRLEYMRVLRSTDPDRFQVMFCYFEDKAIQKDKSGMMQCVIAVADKVFDAFLNMMAEKAKTKENEEELERHAQFLLVNFNHIHKRIRRVADKYLSGLVDKFPHLLWSGTVLKTMLDILQTLSLSLSADIHKDQPYYDIPDAPYRITVPDTYEARESIVKDFAARCGMILQEAMKWAPTVTKSHLQEYLNKHQNWVSGLSQHTGLAMATESILHFAGYNKQNTTLGVTQLTERPACVKKDYSNFMASLNLRNRYAGEVHGMIRFSGATGQMSDLNKMMVQDLITALDHSHPQHYTQAMFKLTAMLISSKDCDPQLLHHLCWGPLRMFNEHGMETALACWEWLLAGKNGVEVPFMREMAGAWHMTVEQKFGLFSAETKEADPLAASEASQPRPCPPEVTPHYIWIDFLVQRFEIAKYCSSDQVEIFSSLLQRSMSLHIGGARGSMNRHVAAIGPRFKLLTLGLSLLHADVVPNATIRNVLREKIYSTAFDYFSCPPKFPTQGEKRLREDISIMIKFWTAMFSDKKYLTASQLVPPDNQDTRSNLDITVGSRQQATQGWINTYPLSSGMSTISKKSGMSKKTNRGSQLHKYYMKRRTLLLSLLATEIERLITWYNPLSAPELELDQAGENSVANWRSKYISLSEKQWKDNVNLAWTISPYLAVQLPARFKNTEAIGNEVTRLVRLDPGAVSDVPEAIKFLVTWHTIDADAPELSHVLCWAPTDPPTGLSYFSSMYPPHPLTAQYGVKVLRSFPPDAILFYIPQIVQALRYDKMGYVREYILWAAAKSQLLAHQFIWNMKTNIYLDEEGHQKDPDIGDLLEQLVEEITGSLSGPAKDFYQREFDFFNKITNVSAIIKPYPKGDERKKACLSALSEVKVQPGCYLPSNPEAIVLDIDYKSGTPMQSAAKAPYLAKFKVKRCGVSELEKEGLQCRSDTEDECRRQEADGKKICWQAAIFKVGDDCRQDMLALQIIDLFKNIFQLVGLDLFVFPYRVVATAPGCGVIECIPDCTSRDQLGRQTDFGMYDYFTRQYGDESTLAFQQARYNFIRSMAAYSLLLFLLQIKDRHNGNIMLDKKGHIIHIDFGFMFESSPGGNLGWEPDIKLTDEMVMIMGGKMEATPFKWFMEMCVRGYLAVRPYMDAVVSLVTLMLDTGLPCFRGQTIKLLKHRFSPNMTEREAANFIMKIIQNCFLSNRSRTYDMIQYYQNDIPY</sequence>
<evidence type="ECO:0000250" key="1">
    <source>
        <dbReference type="UniProtKB" id="E9Q3L2"/>
    </source>
</evidence>
<evidence type="ECO:0000250" key="2">
    <source>
        <dbReference type="UniProtKB" id="P42356"/>
    </source>
</evidence>
<evidence type="ECO:0000255" key="3">
    <source>
        <dbReference type="PROSITE-ProRule" id="PRU00269"/>
    </source>
</evidence>
<evidence type="ECO:0000255" key="4">
    <source>
        <dbReference type="PROSITE-ProRule" id="PRU00878"/>
    </source>
</evidence>
<evidence type="ECO:0000256" key="5">
    <source>
        <dbReference type="SAM" id="MobiDB-lite"/>
    </source>
</evidence>
<evidence type="ECO:0000269" key="6">
    <source>
    </source>
</evidence>
<evidence type="ECO:0000305" key="7"/>
<evidence type="ECO:0007744" key="8">
    <source>
    </source>
</evidence>
<gene>
    <name type="primary">Pi4ka</name>
    <name type="synonym">Pik4ca</name>
</gene>
<reference key="1">
    <citation type="journal article" date="1996" name="J. Biol. Chem.">
        <title>Cloning, expression, and localization of 230-kDa phosphatidylinositol 4-kinase.</title>
        <authorList>
            <person name="Nakagawa T."/>
            <person name="Goto K."/>
            <person name="Kondo H."/>
        </authorList>
    </citation>
    <scope>NUCLEOTIDE SEQUENCE [MRNA] OF 53-2096</scope>
    <scope>CATALYTIC ACTIVITY</scope>
    <scope>TISSUE SPECIFICITY</scope>
    <scope>SUBCELLULAR LOCATION</scope>
    <scope>ACTIVITY REGULATION</scope>
    <source>
        <strain>Wistar</strain>
        <tissue>Brain</tissue>
    </source>
</reference>
<reference key="2">
    <citation type="journal article" date="2004" name="Nature">
        <title>Genome sequence of the Brown Norway rat yields insights into mammalian evolution.</title>
        <authorList>
            <person name="Gibbs R.A."/>
            <person name="Weinstock G.M."/>
            <person name="Metzker M.L."/>
            <person name="Muzny D.M."/>
            <person name="Sodergren E.J."/>
            <person name="Scherer S."/>
            <person name="Scott G."/>
            <person name="Steffen D."/>
            <person name="Worley K.C."/>
            <person name="Burch P.E."/>
            <person name="Okwuonu G."/>
            <person name="Hines S."/>
            <person name="Lewis L."/>
            <person name="Deramo C."/>
            <person name="Delgado O."/>
            <person name="Dugan-Rocha S."/>
            <person name="Miner G."/>
            <person name="Morgan M."/>
            <person name="Hawes A."/>
            <person name="Gill R."/>
            <person name="Holt R.A."/>
            <person name="Adams M.D."/>
            <person name="Amanatides P.G."/>
            <person name="Baden-Tillson H."/>
            <person name="Barnstead M."/>
            <person name="Chin S."/>
            <person name="Evans C.A."/>
            <person name="Ferriera S."/>
            <person name="Fosler C."/>
            <person name="Glodek A."/>
            <person name="Gu Z."/>
            <person name="Jennings D."/>
            <person name="Kraft C.L."/>
            <person name="Nguyen T."/>
            <person name="Pfannkoch C.M."/>
            <person name="Sitter C."/>
            <person name="Sutton G.G."/>
            <person name="Venter J.C."/>
            <person name="Woodage T."/>
            <person name="Smith D."/>
            <person name="Lee H.-M."/>
            <person name="Gustafson E."/>
            <person name="Cahill P."/>
            <person name="Kana A."/>
            <person name="Doucette-Stamm L."/>
            <person name="Weinstock K."/>
            <person name="Fechtel K."/>
            <person name="Weiss R.B."/>
            <person name="Dunn D.M."/>
            <person name="Green E.D."/>
            <person name="Blakesley R.W."/>
            <person name="Bouffard G.G."/>
            <person name="De Jong P.J."/>
            <person name="Osoegawa K."/>
            <person name="Zhu B."/>
            <person name="Marra M."/>
            <person name="Schein J."/>
            <person name="Bosdet I."/>
            <person name="Fjell C."/>
            <person name="Jones S."/>
            <person name="Krzywinski M."/>
            <person name="Mathewson C."/>
            <person name="Siddiqui A."/>
            <person name="Wye N."/>
            <person name="McPherson J."/>
            <person name="Zhao S."/>
            <person name="Fraser C.M."/>
            <person name="Shetty J."/>
            <person name="Shatsman S."/>
            <person name="Geer K."/>
            <person name="Chen Y."/>
            <person name="Abramzon S."/>
            <person name="Nierman W.C."/>
            <person name="Havlak P.H."/>
            <person name="Chen R."/>
            <person name="Durbin K.J."/>
            <person name="Egan A."/>
            <person name="Ren Y."/>
            <person name="Song X.-Z."/>
            <person name="Li B."/>
            <person name="Liu Y."/>
            <person name="Qin X."/>
            <person name="Cawley S."/>
            <person name="Cooney A.J."/>
            <person name="D'Souza L.M."/>
            <person name="Martin K."/>
            <person name="Wu J.Q."/>
            <person name="Gonzalez-Garay M.L."/>
            <person name="Jackson A.R."/>
            <person name="Kalafus K.J."/>
            <person name="McLeod M.P."/>
            <person name="Milosavljevic A."/>
            <person name="Virk D."/>
            <person name="Volkov A."/>
            <person name="Wheeler D.A."/>
            <person name="Zhang Z."/>
            <person name="Bailey J.A."/>
            <person name="Eichler E.E."/>
            <person name="Tuzun E."/>
            <person name="Birney E."/>
            <person name="Mongin E."/>
            <person name="Ureta-Vidal A."/>
            <person name="Woodwark C."/>
            <person name="Zdobnov E."/>
            <person name="Bork P."/>
            <person name="Suyama M."/>
            <person name="Torrents D."/>
            <person name="Alexandersson M."/>
            <person name="Trask B.J."/>
            <person name="Young J.M."/>
            <person name="Huang H."/>
            <person name="Wang H."/>
            <person name="Xing H."/>
            <person name="Daniels S."/>
            <person name="Gietzen D."/>
            <person name="Schmidt J."/>
            <person name="Stevens K."/>
            <person name="Vitt U."/>
            <person name="Wingrove J."/>
            <person name="Camara F."/>
            <person name="Mar Alba M."/>
            <person name="Abril J.F."/>
            <person name="Guigo R."/>
            <person name="Smit A."/>
            <person name="Dubchak I."/>
            <person name="Rubin E.M."/>
            <person name="Couronne O."/>
            <person name="Poliakov A."/>
            <person name="Huebner N."/>
            <person name="Ganten D."/>
            <person name="Goesele C."/>
            <person name="Hummel O."/>
            <person name="Kreitler T."/>
            <person name="Lee Y.-A."/>
            <person name="Monti J."/>
            <person name="Schulz H."/>
            <person name="Zimdahl H."/>
            <person name="Himmelbauer H."/>
            <person name="Lehrach H."/>
            <person name="Jacob H.J."/>
            <person name="Bromberg S."/>
            <person name="Gullings-Handley J."/>
            <person name="Jensen-Seaman M.I."/>
            <person name="Kwitek A.E."/>
            <person name="Lazar J."/>
            <person name="Pasko D."/>
            <person name="Tonellato P.J."/>
            <person name="Twigger S."/>
            <person name="Ponting C.P."/>
            <person name="Duarte J.M."/>
            <person name="Rice S."/>
            <person name="Goodstadt L."/>
            <person name="Beatson S.A."/>
            <person name="Emes R.D."/>
            <person name="Winter E.E."/>
            <person name="Webber C."/>
            <person name="Brandt P."/>
            <person name="Nyakatura G."/>
            <person name="Adetobi M."/>
            <person name="Chiaromonte F."/>
            <person name="Elnitski L."/>
            <person name="Eswara P."/>
            <person name="Hardison R.C."/>
            <person name="Hou M."/>
            <person name="Kolbe D."/>
            <person name="Makova K."/>
            <person name="Miller W."/>
            <person name="Nekrutenko A."/>
            <person name="Riemer C."/>
            <person name="Schwartz S."/>
            <person name="Taylor J."/>
            <person name="Yang S."/>
            <person name="Zhang Y."/>
            <person name="Lindpaintner K."/>
            <person name="Andrews T.D."/>
            <person name="Caccamo M."/>
            <person name="Clamp M."/>
            <person name="Clarke L."/>
            <person name="Curwen V."/>
            <person name="Durbin R.M."/>
            <person name="Eyras E."/>
            <person name="Searle S.M."/>
            <person name="Cooper G.M."/>
            <person name="Batzoglou S."/>
            <person name="Brudno M."/>
            <person name="Sidow A."/>
            <person name="Stone E.A."/>
            <person name="Payseur B.A."/>
            <person name="Bourque G."/>
            <person name="Lopez-Otin C."/>
            <person name="Puente X.S."/>
            <person name="Chakrabarti K."/>
            <person name="Chatterji S."/>
            <person name="Dewey C."/>
            <person name="Pachter L."/>
            <person name="Bray N."/>
            <person name="Yap V.B."/>
            <person name="Caspi A."/>
            <person name="Tesler G."/>
            <person name="Pevzner P.A."/>
            <person name="Haussler D."/>
            <person name="Roskin K.M."/>
            <person name="Baertsch R."/>
            <person name="Clawson H."/>
            <person name="Furey T.S."/>
            <person name="Hinrichs A.S."/>
            <person name="Karolchik D."/>
            <person name="Kent W.J."/>
            <person name="Rosenbloom K.R."/>
            <person name="Trumbower H."/>
            <person name="Weirauch M."/>
            <person name="Cooper D.N."/>
            <person name="Stenson P.D."/>
            <person name="Ma B."/>
            <person name="Brent M."/>
            <person name="Arumugam M."/>
            <person name="Shteynberg D."/>
            <person name="Copley R.R."/>
            <person name="Taylor M.S."/>
            <person name="Riethman H."/>
            <person name="Mudunuri U."/>
            <person name="Peterson J."/>
            <person name="Guyer M."/>
            <person name="Felsenfeld A."/>
            <person name="Old S."/>
            <person name="Mockrin S."/>
            <person name="Collins F.S."/>
        </authorList>
    </citation>
    <scope>NUCLEOTIDE SEQUENCE [LARGE SCALE GENOMIC DNA]</scope>
    <source>
        <strain>Brown Norway</strain>
    </source>
</reference>
<reference key="3">
    <citation type="journal article" date="2012" name="J. Cell Biol.">
        <title>PtdIns4P synthesis by PI4KIIIalpha at the plasma membrane and its impact on plasma membrane identity.</title>
        <authorList>
            <person name="Nakatsu F."/>
            <person name="Baskin J.M."/>
            <person name="Chung J."/>
            <person name="Tanner L.B."/>
            <person name="Shui G."/>
            <person name="Lee S.Y."/>
            <person name="Pirruccello M."/>
            <person name="Hao M."/>
            <person name="Ingolia N.T."/>
            <person name="Wenk M.R."/>
            <person name="De Camilli P."/>
        </authorList>
    </citation>
    <scope>GENE STRUCTURE</scope>
</reference>
<reference key="4">
    <citation type="journal article" date="2012" name="Nat. Commun.">
        <title>Quantitative maps of protein phosphorylation sites across 14 different rat organs and tissues.</title>
        <authorList>
            <person name="Lundby A."/>
            <person name="Secher A."/>
            <person name="Lage K."/>
            <person name="Nordsborg N.B."/>
            <person name="Dmytriyev A."/>
            <person name="Lundby C."/>
            <person name="Olsen J.V."/>
        </authorList>
    </citation>
    <scope>PHOSPHORYLATION [LARGE SCALE ANALYSIS] AT SER-254; SER-259 AND SER-1430</scope>
    <scope>IDENTIFICATION BY MASS SPECTROMETRY [LARGE SCALE ANALYSIS]</scope>
</reference>
<protein>
    <recommendedName>
        <fullName>Phosphatidylinositol 4-kinase alpha</fullName>
        <shortName>PI4-kinase alpha</shortName>
        <shortName>PI4K-alpha</shortName>
        <shortName>PtdIns-4-kinase alpha</shortName>
        <ecNumber evidence="6">2.7.1.67</ecNumber>
    </recommendedName>
</protein>
<proteinExistence type="evidence at protein level"/>
<feature type="chain" id="PRO_0000425713" description="Phosphatidylinositol 4-kinase alpha">
    <location>
        <begin position="1"/>
        <end position="2096"/>
    </location>
</feature>
<feature type="domain" description="PIK helical" evidence="4">
    <location>
        <begin position="1524"/>
        <end position="1712"/>
    </location>
</feature>
<feature type="domain" description="PI3K/PI4K catalytic" evidence="3">
    <location>
        <begin position="1802"/>
        <end position="2080"/>
    </location>
</feature>
<feature type="region of interest" description="Disordered" evidence="5">
    <location>
        <begin position="1"/>
        <end position="20"/>
    </location>
</feature>
<feature type="region of interest" description="G-loop" evidence="3">
    <location>
        <begin position="1808"/>
        <end position="1814"/>
    </location>
</feature>
<feature type="region of interest" description="Catalytic loop" evidence="3">
    <location>
        <begin position="1948"/>
        <end position="1956"/>
    </location>
</feature>
<feature type="region of interest" description="Activation loop" evidence="3">
    <location>
        <begin position="1967"/>
        <end position="1991"/>
    </location>
</feature>
<feature type="modified residue" description="Phosphoserine" evidence="2">
    <location>
        <position position="224"/>
    </location>
</feature>
<feature type="modified residue" description="Phosphoserine" evidence="2">
    <location>
        <position position="250"/>
    </location>
</feature>
<feature type="modified residue" description="Phosphoserine" evidence="2">
    <location>
        <position position="251"/>
    </location>
</feature>
<feature type="modified residue" description="Phosphoserine" evidence="1">
    <location>
        <position position="253"/>
    </location>
</feature>
<feature type="modified residue" description="Phosphoserine" evidence="8">
    <location>
        <position position="254"/>
    </location>
</feature>
<feature type="modified residue" description="Phosphoserine" evidence="2">
    <location>
        <position position="256"/>
    </location>
</feature>
<feature type="modified residue" description="Phosphoserine" evidence="8">
    <location>
        <position position="259"/>
    </location>
</feature>
<feature type="modified residue" description="Phosphoserine" evidence="2">
    <location>
        <position position="423"/>
    </location>
</feature>
<feature type="modified residue" description="Phosphoserine" evidence="8">
    <location>
        <position position="1430"/>
    </location>
</feature>
<feature type="sequence conflict" description="In Ref. 1; BAA19614." evidence="7" ref="1">
    <original>R</original>
    <variation>K</variation>
    <location>
        <position position="186"/>
    </location>
</feature>
<feature type="sequence conflict" description="In Ref. 1; BAA19614." evidence="7" ref="1">
    <location>
        <begin position="631"/>
        <end position="633"/>
    </location>
</feature>
<name>PI4KA_RAT</name>
<accession>O08662</accession>
<accession>A0A0G2K2J3</accession>
<comment type="function">
    <text evidence="6">Acts on phosphatidylinositol (PtdIns) in the first committed step in the production of the second messenger inositol-1,4,5,-trisphosphate.</text>
</comment>
<comment type="catalytic activity">
    <reaction evidence="6">
        <text>a 1,2-diacyl-sn-glycero-3-phospho-(1D-myo-inositol) + ATP = a 1,2-diacyl-sn-glycero-3-phospho-(1D-myo-inositol 4-phosphate) + ADP + H(+)</text>
        <dbReference type="Rhea" id="RHEA:19877"/>
        <dbReference type="ChEBI" id="CHEBI:15378"/>
        <dbReference type="ChEBI" id="CHEBI:30616"/>
        <dbReference type="ChEBI" id="CHEBI:57880"/>
        <dbReference type="ChEBI" id="CHEBI:58178"/>
        <dbReference type="ChEBI" id="CHEBI:456216"/>
        <dbReference type="EC" id="2.7.1.67"/>
    </reaction>
</comment>
<comment type="activity regulation">
    <text evidence="2 6">Activated by Triton X-100, insensitive to inhibition by adenosine and inhibited by wortmannin (PubMed:8662589). The PI4K complex acts as a regulator of phosphatidylinositol 4-phosphate (PtdIns(4)P) synthesis (By similarity). Interaction with TMEM150A regulates PtdIns(4)P synthesis (By similarity).</text>
</comment>
<comment type="subunit">
    <text evidence="2">Component of a phosphatidylinositol 4-kinase (PI4K) complex, composed of PI4KA, EFR3 (EFR3A or EFR3B), TTC7 (TTC7A or TTC7B) and HYCC (HYCC1 or HYCC2). Interacts with TMEM150A; regulating recruitment to the plasma membrane. Interacts with TTC7A.</text>
</comment>
<comment type="subcellular location">
    <subcellularLocation>
        <location evidence="2">Cytoplasm</location>
    </subcellularLocation>
    <subcellularLocation>
        <location evidence="2">Cell membrane</location>
    </subcellularLocation>
    <text evidence="2">Localization to the plasma membrane is mediated by the PI4K complex and association with EFR3 (EFR3A or EFR3B), TTC7 (TTC7A or TTC7B) and HYCC (HYCC1 or HYCC2). Localization to the plasma membrane is regulated by TMEM150A.</text>
</comment>
<comment type="tissue specificity">
    <text evidence="6">Detected in the brain, kidney and lung. Less intensely expressed in the small intestine, uterus, adrenal gland, heart, skeletal muscle, thymus, spleen and testis.</text>
</comment>
<comment type="developmental stage">
    <text evidence="6">In brain of prenatal day 18 embryos, the expression is detected throughout the mantle zone of fore-, mid-, and hind brain. In the cerebrum, the expression is intense in the cortical plate and weak in the ventricular zone. At P49, expressed in the gray matter of the entire brain by hippocampal pyramidal cells, dentate granule cells, and cerebellar granule cells and to a lower extent by olfactory mitral and granule cells and the cerebral cortex. Weakly expressed in the diencephalon and brain stem and not detected in the cerebellar medulla. Expression is much higher in the fetal brain than the adult brain, especially in the brain stem.</text>
</comment>
<comment type="similarity">
    <text evidence="7">Belongs to the PI3/PI4-kinase family. Type III PI4K subfamily.</text>
</comment>